<proteinExistence type="inferred from homology"/>
<feature type="peptide" id="PRO_0000044780" description="A2-specific pheromone">
    <location>
        <begin position="1"/>
        <end position="35"/>
    </location>
</feature>
<feature type="propeptide" id="PRO_0000403475" description="Removed in mature form" evidence="1">
    <location>
        <begin position="36"/>
        <end position="38"/>
    </location>
</feature>
<feature type="modified residue" description="Cysteine methyl ester" evidence="1">
    <location>
        <position position="35"/>
    </location>
</feature>
<feature type="lipid moiety-binding region" description="S-farnesyl cysteine" evidence="1">
    <location>
        <position position="35"/>
    </location>
</feature>
<comment type="function">
    <text>Mating pheromone for A2 allele.</text>
</comment>
<comment type="subcellular location">
    <subcellularLocation>
        <location evidence="2">Cell membrane</location>
        <topology evidence="2">Lipid-anchor</topology>
        <orientation evidence="2">Cytoplasmic side</orientation>
    </subcellularLocation>
</comment>
<evidence type="ECO:0000255" key="1"/>
<evidence type="ECO:0000305" key="2"/>
<sequence>MLSIFETVAAAAPVTVAETQQASNNENRGQPGYYCLIA</sequence>
<protein>
    <recommendedName>
        <fullName>A2-specific pheromone</fullName>
    </recommendedName>
    <alternativeName>
        <fullName>Mating factor A2</fullName>
    </alternativeName>
</protein>
<dbReference type="EMBL" id="U37796">
    <property type="protein sequence ID" value="AAA99771.1"/>
    <property type="molecule type" value="Genomic_DNA"/>
</dbReference>
<dbReference type="PIR" id="B42087">
    <property type="entry name" value="B42087"/>
</dbReference>
<dbReference type="GO" id="GO:0005886">
    <property type="term" value="C:plasma membrane"/>
    <property type="evidence" value="ECO:0007669"/>
    <property type="project" value="UniProtKB-SubCell"/>
</dbReference>
<dbReference type="GO" id="GO:0005186">
    <property type="term" value="F:pheromone activity"/>
    <property type="evidence" value="ECO:0007669"/>
    <property type="project" value="UniProtKB-KW"/>
</dbReference>
<organism>
    <name type="scientific">Mycosarcoma maydis</name>
    <name type="common">Corn smut fungus</name>
    <name type="synonym">Ustilago maydis</name>
    <dbReference type="NCBI Taxonomy" id="5270"/>
    <lineage>
        <taxon>Eukaryota</taxon>
        <taxon>Fungi</taxon>
        <taxon>Dikarya</taxon>
        <taxon>Basidiomycota</taxon>
        <taxon>Ustilaginomycotina</taxon>
        <taxon>Ustilaginomycetes</taxon>
        <taxon>Ustilaginales</taxon>
        <taxon>Ustilaginaceae</taxon>
        <taxon>Mycosarcoma</taxon>
    </lineage>
</organism>
<accession>P31963</accession>
<keyword id="KW-1003">Cell membrane</keyword>
<keyword id="KW-0449">Lipoprotein</keyword>
<keyword id="KW-0472">Membrane</keyword>
<keyword id="KW-0488">Methylation</keyword>
<keyword id="KW-0588">Pheromone</keyword>
<keyword id="KW-0636">Prenylation</keyword>
<gene>
    <name type="primary">MFA2</name>
</gene>
<reference key="1">
    <citation type="journal article" date="1992" name="Cell">
        <title>The a mating type locus of U. maydis specifies cell signaling components.</title>
        <authorList>
            <person name="Boelker M."/>
            <person name="Urban M."/>
            <person name="Kahmann R."/>
        </authorList>
    </citation>
    <scope>NUCLEOTIDE SEQUENCE [GENOMIC DNA]</scope>
    <source>
        <strain>FBD11-21</strain>
    </source>
</reference>
<reference key="2">
    <citation type="journal article" date="1996" name="Mol. Gen. Genet.">
        <title>The biallelic a mating type locus of Ustilago maydis: remnants of an additional pheromone gene indicate evolution from a multiallelic ancestor.</title>
        <authorList>
            <person name="Urban M."/>
            <person name="Kahmann R."/>
            <person name="Boelker M."/>
        </authorList>
    </citation>
    <scope>NUCLEOTIDE SEQUENCE [GENOMIC DNA]</scope>
    <source>
        <strain>FBD11-21</strain>
    </source>
</reference>
<name>MFA2_MYCMD</name>